<name>NMES1_HUMAN</name>
<organism>
    <name type="scientific">Homo sapiens</name>
    <name type="common">Human</name>
    <dbReference type="NCBI Taxonomy" id="9606"/>
    <lineage>
        <taxon>Eukaryota</taxon>
        <taxon>Metazoa</taxon>
        <taxon>Chordata</taxon>
        <taxon>Craniata</taxon>
        <taxon>Vertebrata</taxon>
        <taxon>Euteleostomi</taxon>
        <taxon>Mammalia</taxon>
        <taxon>Eutheria</taxon>
        <taxon>Euarchontoglires</taxon>
        <taxon>Primates</taxon>
        <taxon>Haplorrhini</taxon>
        <taxon>Catarrhini</taxon>
        <taxon>Hominidae</taxon>
        <taxon>Homo</taxon>
    </lineage>
</organism>
<reference key="1">
    <citation type="journal article" date="2002" name="Int. J. Cancer">
        <title>A novel gene, NMES1, downregulated in human esophageal squamous cell carcinoma.</title>
        <authorList>
            <person name="Zhou J."/>
            <person name="Wang H."/>
            <person name="Lu A."/>
            <person name="Hu G."/>
            <person name="Luo A."/>
            <person name="Ding F."/>
            <person name="Zhang J."/>
            <person name="Wang X."/>
            <person name="Wu M."/>
            <person name="Liu Z."/>
        </authorList>
    </citation>
    <scope>NUCLEOTIDE SEQUENCE [MRNA]</scope>
    <scope>SUBCELLULAR LOCATION</scope>
</reference>
<reference key="2">
    <citation type="submission" date="1999-04" db="EMBL/GenBank/DDBJ databases">
        <title>Homo sapiens mRNA for FOAP-11 protein, complete cds.</title>
        <authorList>
            <person name="Fujii Y."/>
            <person name="Takayama K."/>
            <person name="Tsuritani K."/>
            <person name="Yajima Y."/>
            <person name="Amemiya T."/>
            <person name="Ukai Y."/>
            <person name="Naito K."/>
            <person name="Kawaguhci A."/>
        </authorList>
    </citation>
    <scope>NUCLEOTIDE SEQUENCE [MRNA]</scope>
    <source>
        <tissue>Macrophage</tissue>
    </source>
</reference>
<reference key="3">
    <citation type="journal article" date="2004" name="Genome Res.">
        <title>The status, quality, and expansion of the NIH full-length cDNA project: the Mammalian Gene Collection (MGC).</title>
        <authorList>
            <consortium name="The MGC Project Team"/>
        </authorList>
    </citation>
    <scope>NUCLEOTIDE SEQUENCE [LARGE SCALE MRNA]</scope>
    <source>
        <tissue>Testis</tissue>
    </source>
</reference>
<gene>
    <name type="primary">NMES1</name>
    <name type="synonym">C15orf48</name>
</gene>
<keyword id="KW-0539">Nucleus</keyword>
<keyword id="KW-1267">Proteomics identification</keyword>
<keyword id="KW-1185">Reference proteome</keyword>
<accession>Q9C002</accession>
<protein>
    <recommendedName>
        <fullName>Normal mucosa of esophagus-specific gene 1 protein</fullName>
    </recommendedName>
    <alternativeName>
        <fullName>Protein FOAP-11</fullName>
    </alternativeName>
</protein>
<feature type="chain" id="PRO_0000118823" description="Normal mucosa of esophagus-specific gene 1 protein">
    <location>
        <begin position="1"/>
        <end position="83"/>
    </location>
</feature>
<evidence type="ECO:0000269" key="1">
    <source>
    </source>
</evidence>
<evidence type="ECO:0000305" key="2"/>
<sequence length="83" mass="9617">MSFFQLLMKRKELIPLVVFMTVAAGGASSFAVYSLWKTDVILDRKKNPEPWETVDPTVPQKLITINQQWKPIEELQNVQRVTK</sequence>
<proteinExistence type="evidence at protein level"/>
<dbReference type="EMBL" id="AF228422">
    <property type="protein sequence ID" value="AAK00708.1"/>
    <property type="molecule type" value="mRNA"/>
</dbReference>
<dbReference type="EMBL" id="AB026707">
    <property type="protein sequence ID" value="BAB61021.1"/>
    <property type="molecule type" value="mRNA"/>
</dbReference>
<dbReference type="EMBL" id="BC021173">
    <property type="protein sequence ID" value="AAH21173.1"/>
    <property type="molecule type" value="mRNA"/>
</dbReference>
<dbReference type="CCDS" id="CCDS10124.1"/>
<dbReference type="RefSeq" id="NP_115789.1">
    <property type="nucleotide sequence ID" value="NM_032413.3"/>
</dbReference>
<dbReference type="RefSeq" id="NP_922946.1">
    <property type="nucleotide sequence ID" value="NM_197955.2"/>
</dbReference>
<dbReference type="SMR" id="Q9C002"/>
<dbReference type="BioGRID" id="124071">
    <property type="interactions" value="140"/>
</dbReference>
<dbReference type="FunCoup" id="Q9C002">
    <property type="interactions" value="492"/>
</dbReference>
<dbReference type="IntAct" id="Q9C002">
    <property type="interactions" value="179"/>
</dbReference>
<dbReference type="STRING" id="9606.ENSP00000341610"/>
<dbReference type="GlyGen" id="Q9C002">
    <property type="glycosylation" value="4 sites, 1 O-linked glycan (4 sites)"/>
</dbReference>
<dbReference type="iPTMnet" id="Q9C002"/>
<dbReference type="PhosphoSitePlus" id="Q9C002"/>
<dbReference type="BioMuta" id="C15orf48"/>
<dbReference type="DMDM" id="23396774"/>
<dbReference type="jPOST" id="Q9C002"/>
<dbReference type="MassIVE" id="Q9C002"/>
<dbReference type="PaxDb" id="9606-ENSP00000341610"/>
<dbReference type="PeptideAtlas" id="Q9C002"/>
<dbReference type="ProteomicsDB" id="79935"/>
<dbReference type="Pumba" id="Q9C002"/>
<dbReference type="TopDownProteomics" id="Q9C002"/>
<dbReference type="Antibodypedia" id="56517">
    <property type="antibodies" value="33 antibodies from 9 providers"/>
</dbReference>
<dbReference type="DNASU" id="84419"/>
<dbReference type="Ensembl" id="ENST00000344300.3">
    <property type="protein sequence ID" value="ENSP00000341610.3"/>
    <property type="gene ID" value="ENSG00000166920.13"/>
</dbReference>
<dbReference type="Ensembl" id="ENST00000396650.7">
    <property type="protein sequence ID" value="ENSP00000379887.2"/>
    <property type="gene ID" value="ENSG00000166920.13"/>
</dbReference>
<dbReference type="GeneID" id="84419"/>
<dbReference type="KEGG" id="hsa:84419"/>
<dbReference type="MANE-Select" id="ENST00000396650.7">
    <property type="protein sequence ID" value="ENSP00000379887.2"/>
    <property type="RefSeq nucleotide sequence ID" value="NM_197955.3"/>
    <property type="RefSeq protein sequence ID" value="NP_922946.1"/>
</dbReference>
<dbReference type="UCSC" id="uc001zvg.5">
    <property type="organism name" value="human"/>
</dbReference>
<dbReference type="AGR" id="HGNC:29898"/>
<dbReference type="CTD" id="84419"/>
<dbReference type="DisGeNET" id="84419"/>
<dbReference type="GeneCards" id="C15orf48"/>
<dbReference type="HGNC" id="HGNC:29898">
    <property type="gene designation" value="C15orf48"/>
</dbReference>
<dbReference type="HPA" id="ENSG00000166920">
    <property type="expression patterns" value="Tissue enriched (intestine)"/>
</dbReference>
<dbReference type="MIM" id="608409">
    <property type="type" value="gene"/>
</dbReference>
<dbReference type="neXtProt" id="NX_Q9C002"/>
<dbReference type="OpenTargets" id="ENSG00000166920"/>
<dbReference type="PharmGKB" id="PA142672265"/>
<dbReference type="VEuPathDB" id="HostDB:ENSG00000166920"/>
<dbReference type="eggNOG" id="ENOG502STGR">
    <property type="taxonomic scope" value="Eukaryota"/>
</dbReference>
<dbReference type="GeneTree" id="ENSGT00390000009277"/>
<dbReference type="HOGENOM" id="CLU_178748_0_0_1"/>
<dbReference type="InParanoid" id="Q9C002"/>
<dbReference type="OMA" id="CFTTRIT"/>
<dbReference type="OrthoDB" id="5511684at2759"/>
<dbReference type="PAN-GO" id="Q9C002">
    <property type="GO annotations" value="1 GO annotation based on evolutionary models"/>
</dbReference>
<dbReference type="PhylomeDB" id="Q9C002"/>
<dbReference type="TreeFam" id="TF106383"/>
<dbReference type="PathwayCommons" id="Q9C002"/>
<dbReference type="SignaLink" id="Q9C002"/>
<dbReference type="BioGRID-ORCS" id="84419">
    <property type="hits" value="5 hits in 1146 CRISPR screens"/>
</dbReference>
<dbReference type="ChiTaRS" id="C15orf48">
    <property type="organism name" value="human"/>
</dbReference>
<dbReference type="GenomeRNAi" id="84419"/>
<dbReference type="Pharos" id="Q9C002">
    <property type="development level" value="Tdark"/>
</dbReference>
<dbReference type="PRO" id="PR:Q9C002"/>
<dbReference type="Proteomes" id="UP000005640">
    <property type="component" value="Chromosome 15"/>
</dbReference>
<dbReference type="RNAct" id="Q9C002">
    <property type="molecule type" value="protein"/>
</dbReference>
<dbReference type="Bgee" id="ENSG00000166920">
    <property type="expression patterns" value="Expressed in mucosa of transverse colon and 93 other cell types or tissues"/>
</dbReference>
<dbReference type="ExpressionAtlas" id="Q9C002">
    <property type="expression patterns" value="baseline and differential"/>
</dbReference>
<dbReference type="GO" id="GO:0005739">
    <property type="term" value="C:mitochondrion"/>
    <property type="evidence" value="ECO:0006056"/>
    <property type="project" value="FlyBase"/>
</dbReference>
<dbReference type="GO" id="GO:0005634">
    <property type="term" value="C:nucleus"/>
    <property type="evidence" value="ECO:0000314"/>
    <property type="project" value="UniProtKB"/>
</dbReference>
<dbReference type="GO" id="GO:0045277">
    <property type="term" value="C:respiratory chain complex IV"/>
    <property type="evidence" value="ECO:0000318"/>
    <property type="project" value="GO_Central"/>
</dbReference>
<dbReference type="GO" id="GO:0009617">
    <property type="term" value="P:response to bacterium"/>
    <property type="evidence" value="ECO:0007669"/>
    <property type="project" value="Ensembl"/>
</dbReference>
<dbReference type="InterPro" id="IPR010530">
    <property type="entry name" value="B12D"/>
</dbReference>
<dbReference type="PANTHER" id="PTHR14256">
    <property type="entry name" value="NADH-UBIQUINONE OXIDOREDUCTASE MLRQ SUBUNIT"/>
    <property type="match status" value="1"/>
</dbReference>
<dbReference type="PANTHER" id="PTHR14256:SF3">
    <property type="entry name" value="NORMAL MUCOSA OF ESOPHAGUS-SPECIFIC GENE 1 PROTEIN"/>
    <property type="match status" value="1"/>
</dbReference>
<dbReference type="Pfam" id="PF06522">
    <property type="entry name" value="B12D"/>
    <property type="match status" value="1"/>
</dbReference>
<comment type="interaction">
    <interactant intactId="EBI-3905285">
        <id>Q9C002</id>
    </interactant>
    <interactant intactId="EBI-466029">
        <id>P42858</id>
        <label>HTT</label>
    </interactant>
    <organismsDiffer>false</organismsDiffer>
    <experiments>3</experiments>
</comment>
<comment type="subcellular location">
    <subcellularLocation>
        <location evidence="1">Nucleus</location>
    </subcellularLocation>
</comment>
<comment type="tissue specificity">
    <text>Expressed mainly in stomach, placenta, small intestine and colon, as well as in normal mucosa of esophagus. Down-regulated in esophageal squamous cell carcinoma.</text>
</comment>
<comment type="similarity">
    <text evidence="2">Belongs to the complex I NDUFA4 subunit family.</text>
</comment>